<organism>
    <name type="scientific">Methanosarcina barkeri (strain Fusaro / DSM 804)</name>
    <dbReference type="NCBI Taxonomy" id="269797"/>
    <lineage>
        <taxon>Archaea</taxon>
        <taxon>Methanobacteriati</taxon>
        <taxon>Methanobacteriota</taxon>
        <taxon>Stenosarchaea group</taxon>
        <taxon>Methanomicrobia</taxon>
        <taxon>Methanosarcinales</taxon>
        <taxon>Methanosarcinaceae</taxon>
        <taxon>Methanosarcina</taxon>
    </lineage>
</organism>
<comment type="function">
    <text evidence="1">Catalyzes amidations at positions B, D, E, and G on adenosylcobyrinic A,C-diamide. NH(2) groups are provided by glutamine, and one molecule of ATP is hydrogenolyzed for each amidation.</text>
</comment>
<comment type="pathway">
    <text evidence="1">Cofactor biosynthesis; adenosylcobalamin biosynthesis.</text>
</comment>
<comment type="similarity">
    <text evidence="1">Belongs to the CobB/CobQ family. CobQ subfamily.</text>
</comment>
<accession>Q466W7</accession>
<protein>
    <recommendedName>
        <fullName evidence="1">Probable cobyric acid synthase</fullName>
    </recommendedName>
</protein>
<feature type="chain" id="PRO_0000332405" description="Probable cobyric acid synthase">
    <location>
        <begin position="1"/>
        <end position="485"/>
    </location>
</feature>
<feature type="domain" description="GATase cobBQ-type" evidence="1">
    <location>
        <begin position="250"/>
        <end position="435"/>
    </location>
</feature>
<feature type="active site" description="Nucleophile" evidence="1">
    <location>
        <position position="328"/>
    </location>
</feature>
<feature type="active site" evidence="1">
    <location>
        <position position="427"/>
    </location>
</feature>
<keyword id="KW-0169">Cobalamin biosynthesis</keyword>
<keyword id="KW-0315">Glutamine amidotransferase</keyword>
<gene>
    <name evidence="1" type="primary">cobQ</name>
    <name type="ordered locus">Mbar_A3191</name>
</gene>
<sequence>MEKKSVLILGTASHVGKSSVVTAICRILSREYRVAPFKAQNMSLNSWITKDGKEIGIAQAIQAKAAGTEPTADMNPVLLKPKGDCVSQIILLGEPYADRSAGKYYESIAEMNEVLEGALKRLCNEHDIIVMEGAGGAAEINLYERDIVNIGTARLTQAPIILVGDIERGGVFASLYGTVALLPEDVRKNVKGFIINKFRGDLEILKPGLKQLEEKTGIPVLGVLPYFKLNIPSEDSVSLEDKEAEKNEKEIEIAVIRLPRISNFTDFEPLERSAKIRYVELDEDLGTPDAIMIPGTKNTVNDLLDLKASGMAEKIQAFKGKIPIFGICGGYQMLGKTIYDSGVENGVEAEFEGLGLLDIGTKFGEYKKRTIQVTKKVSAYGPILAPIDGEEIKGYEIHMGITDSCRNIFGNDGAIDKAGLVIGTYLHGLFDNKNIRDALMQYLYEKKGLEYIPENSMTESDAYEELANVVEQNLDMEKFYEIIGI</sequence>
<reference key="1">
    <citation type="journal article" date="2006" name="J. Bacteriol.">
        <title>The Methanosarcina barkeri genome: comparative analysis with Methanosarcina acetivorans and Methanosarcina mazei reveals extensive rearrangement within methanosarcinal genomes.</title>
        <authorList>
            <person name="Maeder D.L."/>
            <person name="Anderson I."/>
            <person name="Brettin T.S."/>
            <person name="Bruce D.C."/>
            <person name="Gilna P."/>
            <person name="Han C.S."/>
            <person name="Lapidus A."/>
            <person name="Metcalf W.W."/>
            <person name="Saunders E."/>
            <person name="Tapia R."/>
            <person name="Sowers K.R."/>
        </authorList>
    </citation>
    <scope>NUCLEOTIDE SEQUENCE [LARGE SCALE GENOMIC DNA]</scope>
    <source>
        <strain>Fusaro / DSM 804</strain>
    </source>
</reference>
<evidence type="ECO:0000255" key="1">
    <source>
        <dbReference type="HAMAP-Rule" id="MF_00028"/>
    </source>
</evidence>
<name>COBQ_METBF</name>
<proteinExistence type="inferred from homology"/>
<dbReference type="EMBL" id="CP000099">
    <property type="protein sequence ID" value="AAZ72075.1"/>
    <property type="molecule type" value="Genomic_DNA"/>
</dbReference>
<dbReference type="SMR" id="Q466W7"/>
<dbReference type="STRING" id="269797.Mbar_A3191"/>
<dbReference type="PaxDb" id="269797-Mbar_A3191"/>
<dbReference type="KEGG" id="mba:Mbar_A3191"/>
<dbReference type="eggNOG" id="arCOG00105">
    <property type="taxonomic scope" value="Archaea"/>
</dbReference>
<dbReference type="HOGENOM" id="CLU_019250_2_2_2"/>
<dbReference type="OrthoDB" id="53136at2157"/>
<dbReference type="UniPathway" id="UPA00148"/>
<dbReference type="GO" id="GO:0015420">
    <property type="term" value="F:ABC-type vitamin B12 transporter activity"/>
    <property type="evidence" value="ECO:0007669"/>
    <property type="project" value="UniProtKB-UniRule"/>
</dbReference>
<dbReference type="GO" id="GO:0003824">
    <property type="term" value="F:catalytic activity"/>
    <property type="evidence" value="ECO:0007669"/>
    <property type="project" value="InterPro"/>
</dbReference>
<dbReference type="GO" id="GO:0009236">
    <property type="term" value="P:cobalamin biosynthetic process"/>
    <property type="evidence" value="ECO:0007669"/>
    <property type="project" value="UniProtKB-UniRule"/>
</dbReference>
<dbReference type="CDD" id="cd05389">
    <property type="entry name" value="CobQ_N"/>
    <property type="match status" value="1"/>
</dbReference>
<dbReference type="CDD" id="cd01750">
    <property type="entry name" value="GATase1_CobQ"/>
    <property type="match status" value="1"/>
</dbReference>
<dbReference type="Gene3D" id="3.40.50.880">
    <property type="match status" value="1"/>
</dbReference>
<dbReference type="Gene3D" id="3.40.50.300">
    <property type="entry name" value="P-loop containing nucleotide triphosphate hydrolases"/>
    <property type="match status" value="1"/>
</dbReference>
<dbReference type="HAMAP" id="MF_00028">
    <property type="entry name" value="CobQ"/>
    <property type="match status" value="1"/>
</dbReference>
<dbReference type="InterPro" id="IPR029062">
    <property type="entry name" value="Class_I_gatase-like"/>
</dbReference>
<dbReference type="InterPro" id="IPR002586">
    <property type="entry name" value="CobQ/CobB/MinD/ParA_Nub-bd_dom"/>
</dbReference>
<dbReference type="InterPro" id="IPR033949">
    <property type="entry name" value="CobQ_GATase1"/>
</dbReference>
<dbReference type="InterPro" id="IPR047045">
    <property type="entry name" value="CobQ_N"/>
</dbReference>
<dbReference type="InterPro" id="IPR004459">
    <property type="entry name" value="CobQ_synth"/>
</dbReference>
<dbReference type="InterPro" id="IPR011698">
    <property type="entry name" value="GATase_3"/>
</dbReference>
<dbReference type="InterPro" id="IPR027417">
    <property type="entry name" value="P-loop_NTPase"/>
</dbReference>
<dbReference type="NCBIfam" id="TIGR00313">
    <property type="entry name" value="cobQ"/>
    <property type="match status" value="1"/>
</dbReference>
<dbReference type="NCBIfam" id="NF001989">
    <property type="entry name" value="PRK00784.1"/>
    <property type="match status" value="1"/>
</dbReference>
<dbReference type="PANTHER" id="PTHR21343:SF1">
    <property type="entry name" value="COBYRIC ACID SYNTHASE"/>
    <property type="match status" value="1"/>
</dbReference>
<dbReference type="PANTHER" id="PTHR21343">
    <property type="entry name" value="DETHIOBIOTIN SYNTHETASE"/>
    <property type="match status" value="1"/>
</dbReference>
<dbReference type="Pfam" id="PF01656">
    <property type="entry name" value="CbiA"/>
    <property type="match status" value="1"/>
</dbReference>
<dbReference type="Pfam" id="PF07685">
    <property type="entry name" value="GATase_3"/>
    <property type="match status" value="1"/>
</dbReference>
<dbReference type="SUPFAM" id="SSF52317">
    <property type="entry name" value="Class I glutamine amidotransferase-like"/>
    <property type="match status" value="1"/>
</dbReference>
<dbReference type="SUPFAM" id="SSF52540">
    <property type="entry name" value="P-loop containing nucleoside triphosphate hydrolases"/>
    <property type="match status" value="1"/>
</dbReference>
<dbReference type="PROSITE" id="PS51274">
    <property type="entry name" value="GATASE_COBBQ"/>
    <property type="match status" value="1"/>
</dbReference>